<sequence>MAKTRGSCCLVNALIAIAFLATAHLCEAGLSQKEQDKVSKLPGQNFNVSFAHYSGFVATNEQLGRALFYWLFEAVEDAKSKPLVLWLNGGPGCSSVAYGEAEEIGPFHIKADGKTLYLNQYSWNQAANILFLDAPVGVGYSYSNTSSDLKSNGDKRTAEDSLKFLLKWVERFPEYKGRDFYIVGESYAGHYIPQLSEAIVKHNQGSDKNSINLKGYMVGNGLMDDFHDRLGLFQYIWSLGFISDQTYSLLQLQCGFESFIHSSKQCNKILEIADKEIGNIDQYSVFTPACVANASQSNMLLKKRPMTSRVSEQYDPCTEKHTTVYFNLPEVQKALHVPPGLAPSKWDTCSDVVSEHWNDSPSSVLNIYHELIAAGLRIWVFSGDADAVVPVTSTRYSIDALNLRPLSAYGPWYLDGQVGGWSQQYAGLNFVTVRGAGHEVPLHRPKQALALFKAFISGTPLSTHENSISRDMSELVSDS</sequence>
<name>SCP29_ARATH</name>
<protein>
    <recommendedName>
        <fullName>Serine carboxypeptidase-like 29</fullName>
        <ecNumber>3.4.16.-</ecNumber>
    </recommendedName>
</protein>
<keyword id="KW-0121">Carboxypeptidase</keyword>
<keyword id="KW-1015">Disulfide bond</keyword>
<keyword id="KW-0325">Glycoprotein</keyword>
<keyword id="KW-0378">Hydrolase</keyword>
<keyword id="KW-0645">Protease</keyword>
<keyword id="KW-1185">Reference proteome</keyword>
<keyword id="KW-0964">Secreted</keyword>
<keyword id="KW-0732">Signal</keyword>
<accession>Q949Q7</accession>
<accession>O65568</accession>
<evidence type="ECO:0000250" key="1"/>
<evidence type="ECO:0000255" key="2"/>
<evidence type="ECO:0000269" key="3">
    <source>
    </source>
</evidence>
<evidence type="ECO:0000305" key="4"/>
<gene>
    <name type="primary">SCPL29</name>
    <name type="ordered locus">At4g30810</name>
    <name type="ORF">F6I18.280</name>
    <name type="ORF">T10C21.3</name>
</gene>
<organism>
    <name type="scientific">Arabidopsis thaliana</name>
    <name type="common">Mouse-ear cress</name>
    <dbReference type="NCBI Taxonomy" id="3702"/>
    <lineage>
        <taxon>Eukaryota</taxon>
        <taxon>Viridiplantae</taxon>
        <taxon>Streptophyta</taxon>
        <taxon>Embryophyta</taxon>
        <taxon>Tracheophyta</taxon>
        <taxon>Spermatophyta</taxon>
        <taxon>Magnoliopsida</taxon>
        <taxon>eudicotyledons</taxon>
        <taxon>Gunneridae</taxon>
        <taxon>Pentapetalae</taxon>
        <taxon>rosids</taxon>
        <taxon>malvids</taxon>
        <taxon>Brassicales</taxon>
        <taxon>Brassicaceae</taxon>
        <taxon>Camelineae</taxon>
        <taxon>Arabidopsis</taxon>
    </lineage>
</organism>
<comment type="function">
    <text evidence="1">Probable carboxypeptidase.</text>
</comment>
<comment type="subcellular location">
    <subcellularLocation>
        <location evidence="4">Secreted</location>
    </subcellularLocation>
</comment>
<comment type="tissue specificity">
    <text evidence="3">Expressed in seedlings, roots, leaves and flowers.</text>
</comment>
<comment type="similarity">
    <text evidence="4">Belongs to the peptidase S10 family.</text>
</comment>
<comment type="sequence caution" evidence="4">
    <conflict type="erroneous gene model prediction">
        <sequence resource="EMBL-CDS" id="CAA18212"/>
    </conflict>
</comment>
<comment type="sequence caution" evidence="4">
    <conflict type="erroneous gene model prediction">
        <sequence resource="EMBL-CDS" id="CAB79799"/>
    </conflict>
</comment>
<dbReference type="EC" id="3.4.16.-"/>
<dbReference type="EMBL" id="AL022198">
    <property type="protein sequence ID" value="CAA18212.1"/>
    <property type="status" value="ALT_SEQ"/>
    <property type="molecule type" value="Genomic_DNA"/>
</dbReference>
<dbReference type="EMBL" id="AL161577">
    <property type="protein sequence ID" value="CAB79799.1"/>
    <property type="status" value="ALT_SEQ"/>
    <property type="molecule type" value="Genomic_DNA"/>
</dbReference>
<dbReference type="EMBL" id="CP002687">
    <property type="protein sequence ID" value="AEE85811.1"/>
    <property type="molecule type" value="Genomic_DNA"/>
</dbReference>
<dbReference type="EMBL" id="AY050958">
    <property type="protein sequence ID" value="AAK93635.1"/>
    <property type="molecule type" value="mRNA"/>
</dbReference>
<dbReference type="EMBL" id="AY133774">
    <property type="protein sequence ID" value="AAM91708.1"/>
    <property type="molecule type" value="mRNA"/>
</dbReference>
<dbReference type="PIR" id="F85360">
    <property type="entry name" value="F85360"/>
</dbReference>
<dbReference type="RefSeq" id="NP_567854.1">
    <property type="nucleotide sequence ID" value="NM_119227.4"/>
</dbReference>
<dbReference type="SMR" id="Q949Q7"/>
<dbReference type="FunCoup" id="Q949Q7">
    <property type="interactions" value="86"/>
</dbReference>
<dbReference type="STRING" id="3702.Q949Q7"/>
<dbReference type="ESTHER" id="arath-SCP29">
    <property type="family name" value="Carboxypeptidase_S10"/>
</dbReference>
<dbReference type="MEROPS" id="S10.A32"/>
<dbReference type="GlyCosmos" id="Q949Q7">
    <property type="glycosylation" value="3 sites, No reported glycans"/>
</dbReference>
<dbReference type="GlyGen" id="Q949Q7">
    <property type="glycosylation" value="3 sites"/>
</dbReference>
<dbReference type="SwissPalm" id="Q949Q7"/>
<dbReference type="PaxDb" id="3702-AT4G30810.1"/>
<dbReference type="ProteomicsDB" id="232745"/>
<dbReference type="EnsemblPlants" id="AT4G30810.1">
    <property type="protein sequence ID" value="AT4G30810.1"/>
    <property type="gene ID" value="AT4G30810"/>
</dbReference>
<dbReference type="GeneID" id="829204"/>
<dbReference type="Gramene" id="AT4G30810.1">
    <property type="protein sequence ID" value="AT4G30810.1"/>
    <property type="gene ID" value="AT4G30810"/>
</dbReference>
<dbReference type="KEGG" id="ath:AT4G30810"/>
<dbReference type="Araport" id="AT4G30810"/>
<dbReference type="TAIR" id="AT4G30810">
    <property type="gene designation" value="SCPL29"/>
</dbReference>
<dbReference type="eggNOG" id="KOG1282">
    <property type="taxonomic scope" value="Eukaryota"/>
</dbReference>
<dbReference type="HOGENOM" id="CLU_008523_13_0_1"/>
<dbReference type="InParanoid" id="Q949Q7"/>
<dbReference type="OMA" id="IVRHNKA"/>
<dbReference type="OrthoDB" id="443318at2759"/>
<dbReference type="PhylomeDB" id="Q949Q7"/>
<dbReference type="PRO" id="PR:Q949Q7"/>
<dbReference type="Proteomes" id="UP000006548">
    <property type="component" value="Chromosome 4"/>
</dbReference>
<dbReference type="ExpressionAtlas" id="Q949Q7">
    <property type="expression patterns" value="baseline and differential"/>
</dbReference>
<dbReference type="GO" id="GO:0005576">
    <property type="term" value="C:extracellular region"/>
    <property type="evidence" value="ECO:0007669"/>
    <property type="project" value="UniProtKB-SubCell"/>
</dbReference>
<dbReference type="GO" id="GO:0000325">
    <property type="term" value="C:plant-type vacuole"/>
    <property type="evidence" value="ECO:0007005"/>
    <property type="project" value="TAIR"/>
</dbReference>
<dbReference type="GO" id="GO:0004185">
    <property type="term" value="F:serine-type carboxypeptidase activity"/>
    <property type="evidence" value="ECO:0007669"/>
    <property type="project" value="InterPro"/>
</dbReference>
<dbReference type="GO" id="GO:0006508">
    <property type="term" value="P:proteolysis"/>
    <property type="evidence" value="ECO:0007669"/>
    <property type="project" value="UniProtKB-KW"/>
</dbReference>
<dbReference type="FunFam" id="3.40.50.11320:FF:000002">
    <property type="entry name" value="Carboxypeptidase"/>
    <property type="match status" value="1"/>
</dbReference>
<dbReference type="FunFam" id="3.40.50.1820:FF:000013">
    <property type="entry name" value="Carboxypeptidase"/>
    <property type="match status" value="1"/>
</dbReference>
<dbReference type="Gene3D" id="3.40.50.11320">
    <property type="match status" value="1"/>
</dbReference>
<dbReference type="Gene3D" id="6.10.250.940">
    <property type="match status" value="1"/>
</dbReference>
<dbReference type="Gene3D" id="3.40.50.1820">
    <property type="entry name" value="alpha/beta hydrolase"/>
    <property type="match status" value="1"/>
</dbReference>
<dbReference type="InterPro" id="IPR029058">
    <property type="entry name" value="AB_hydrolase_fold"/>
</dbReference>
<dbReference type="InterPro" id="IPR001563">
    <property type="entry name" value="Peptidase_S10"/>
</dbReference>
<dbReference type="InterPro" id="IPR033124">
    <property type="entry name" value="Ser_caboxypep_his_AS"/>
</dbReference>
<dbReference type="InterPro" id="IPR018202">
    <property type="entry name" value="Ser_caboxypep_ser_AS"/>
</dbReference>
<dbReference type="PANTHER" id="PTHR11802:SF32">
    <property type="entry name" value="SERINE CARBOXYPEPTIDASE-LIKE 29"/>
    <property type="match status" value="1"/>
</dbReference>
<dbReference type="PANTHER" id="PTHR11802">
    <property type="entry name" value="SERINE PROTEASE FAMILY S10 SERINE CARBOXYPEPTIDASE"/>
    <property type="match status" value="1"/>
</dbReference>
<dbReference type="Pfam" id="PF00450">
    <property type="entry name" value="Peptidase_S10"/>
    <property type="match status" value="1"/>
</dbReference>
<dbReference type="PRINTS" id="PR00724">
    <property type="entry name" value="CRBOXYPTASEC"/>
</dbReference>
<dbReference type="SUPFAM" id="SSF53474">
    <property type="entry name" value="alpha/beta-Hydrolases"/>
    <property type="match status" value="1"/>
</dbReference>
<dbReference type="PROSITE" id="PS00560">
    <property type="entry name" value="CARBOXYPEPT_SER_HIS"/>
    <property type="match status" value="1"/>
</dbReference>
<dbReference type="PROSITE" id="PS00131">
    <property type="entry name" value="CARBOXYPEPT_SER_SER"/>
    <property type="match status" value="1"/>
</dbReference>
<feature type="signal peptide" evidence="2">
    <location>
        <begin position="1"/>
        <end position="28"/>
    </location>
</feature>
<feature type="chain" id="PRO_0000274644" description="Serine carboxypeptidase-like 29">
    <location>
        <begin position="29"/>
        <end position="479"/>
    </location>
</feature>
<feature type="active site" evidence="1">
    <location>
        <position position="186"/>
    </location>
</feature>
<feature type="active site" evidence="1">
    <location>
        <position position="386"/>
    </location>
</feature>
<feature type="active site" evidence="1">
    <location>
        <position position="438"/>
    </location>
</feature>
<feature type="glycosylation site" description="N-linked (GlcNAc...) asparagine" evidence="2">
    <location>
        <position position="47"/>
    </location>
</feature>
<feature type="glycosylation site" description="N-linked (GlcNAc...) asparagine" evidence="2">
    <location>
        <position position="144"/>
    </location>
</feature>
<feature type="glycosylation site" description="N-linked (GlcNAc...) asparagine" evidence="2">
    <location>
        <position position="293"/>
    </location>
</feature>
<feature type="disulfide bond" evidence="1">
    <location>
        <begin position="93"/>
        <end position="349"/>
    </location>
</feature>
<feature type="disulfide bond" evidence="1">
    <location>
        <begin position="254"/>
        <end position="266"/>
    </location>
</feature>
<feature type="disulfide bond" evidence="1">
    <location>
        <begin position="290"/>
        <end position="317"/>
    </location>
</feature>
<proteinExistence type="evidence at transcript level"/>
<reference key="1">
    <citation type="journal article" date="1999" name="Nature">
        <title>Sequence and analysis of chromosome 4 of the plant Arabidopsis thaliana.</title>
        <authorList>
            <person name="Mayer K.F.X."/>
            <person name="Schueller C."/>
            <person name="Wambutt R."/>
            <person name="Murphy G."/>
            <person name="Volckaert G."/>
            <person name="Pohl T."/>
            <person name="Duesterhoeft A."/>
            <person name="Stiekema W."/>
            <person name="Entian K.-D."/>
            <person name="Terryn N."/>
            <person name="Harris B."/>
            <person name="Ansorge W."/>
            <person name="Brandt P."/>
            <person name="Grivell L.A."/>
            <person name="Rieger M."/>
            <person name="Weichselgartner M."/>
            <person name="de Simone V."/>
            <person name="Obermaier B."/>
            <person name="Mache R."/>
            <person name="Mueller M."/>
            <person name="Kreis M."/>
            <person name="Delseny M."/>
            <person name="Puigdomenech P."/>
            <person name="Watson M."/>
            <person name="Schmidtheini T."/>
            <person name="Reichert B."/>
            <person name="Portetelle D."/>
            <person name="Perez-Alonso M."/>
            <person name="Boutry M."/>
            <person name="Bancroft I."/>
            <person name="Vos P."/>
            <person name="Hoheisel J."/>
            <person name="Zimmermann W."/>
            <person name="Wedler H."/>
            <person name="Ridley P."/>
            <person name="Langham S.-A."/>
            <person name="McCullagh B."/>
            <person name="Bilham L."/>
            <person name="Robben J."/>
            <person name="van der Schueren J."/>
            <person name="Grymonprez B."/>
            <person name="Chuang Y.-J."/>
            <person name="Vandenbussche F."/>
            <person name="Braeken M."/>
            <person name="Weltjens I."/>
            <person name="Voet M."/>
            <person name="Bastiaens I."/>
            <person name="Aert R."/>
            <person name="Defoor E."/>
            <person name="Weitzenegger T."/>
            <person name="Bothe G."/>
            <person name="Ramsperger U."/>
            <person name="Hilbert H."/>
            <person name="Braun M."/>
            <person name="Holzer E."/>
            <person name="Brandt A."/>
            <person name="Peters S."/>
            <person name="van Staveren M."/>
            <person name="Dirkse W."/>
            <person name="Mooijman P."/>
            <person name="Klein Lankhorst R."/>
            <person name="Rose M."/>
            <person name="Hauf J."/>
            <person name="Koetter P."/>
            <person name="Berneiser S."/>
            <person name="Hempel S."/>
            <person name="Feldpausch M."/>
            <person name="Lamberth S."/>
            <person name="Van den Daele H."/>
            <person name="De Keyser A."/>
            <person name="Buysshaert C."/>
            <person name="Gielen J."/>
            <person name="Villarroel R."/>
            <person name="De Clercq R."/>
            <person name="van Montagu M."/>
            <person name="Rogers J."/>
            <person name="Cronin A."/>
            <person name="Quail M.A."/>
            <person name="Bray-Allen S."/>
            <person name="Clark L."/>
            <person name="Doggett J."/>
            <person name="Hall S."/>
            <person name="Kay M."/>
            <person name="Lennard N."/>
            <person name="McLay K."/>
            <person name="Mayes R."/>
            <person name="Pettett A."/>
            <person name="Rajandream M.A."/>
            <person name="Lyne M."/>
            <person name="Benes V."/>
            <person name="Rechmann S."/>
            <person name="Borkova D."/>
            <person name="Bloecker H."/>
            <person name="Scharfe M."/>
            <person name="Grimm M."/>
            <person name="Loehnert T.-H."/>
            <person name="Dose S."/>
            <person name="de Haan M."/>
            <person name="Maarse A.C."/>
            <person name="Schaefer M."/>
            <person name="Mueller-Auer S."/>
            <person name="Gabel C."/>
            <person name="Fuchs M."/>
            <person name="Fartmann B."/>
            <person name="Granderath K."/>
            <person name="Dauner D."/>
            <person name="Herzl A."/>
            <person name="Neumann S."/>
            <person name="Argiriou A."/>
            <person name="Vitale D."/>
            <person name="Liguori R."/>
            <person name="Piravandi E."/>
            <person name="Massenet O."/>
            <person name="Quigley F."/>
            <person name="Clabauld G."/>
            <person name="Muendlein A."/>
            <person name="Felber R."/>
            <person name="Schnabl S."/>
            <person name="Hiller R."/>
            <person name="Schmidt W."/>
            <person name="Lecharny A."/>
            <person name="Aubourg S."/>
            <person name="Chefdor F."/>
            <person name="Cooke R."/>
            <person name="Berger C."/>
            <person name="Monfort A."/>
            <person name="Casacuberta E."/>
            <person name="Gibbons T."/>
            <person name="Weber N."/>
            <person name="Vandenbol M."/>
            <person name="Bargues M."/>
            <person name="Terol J."/>
            <person name="Torres A."/>
            <person name="Perez-Perez A."/>
            <person name="Purnelle B."/>
            <person name="Bent E."/>
            <person name="Johnson S."/>
            <person name="Tacon D."/>
            <person name="Jesse T."/>
            <person name="Heijnen L."/>
            <person name="Schwarz S."/>
            <person name="Scholler P."/>
            <person name="Heber S."/>
            <person name="Francs P."/>
            <person name="Bielke C."/>
            <person name="Frishman D."/>
            <person name="Haase D."/>
            <person name="Lemcke K."/>
            <person name="Mewes H.-W."/>
            <person name="Stocker S."/>
            <person name="Zaccaria P."/>
            <person name="Bevan M."/>
            <person name="Wilson R.K."/>
            <person name="de la Bastide M."/>
            <person name="Habermann K."/>
            <person name="Parnell L."/>
            <person name="Dedhia N."/>
            <person name="Gnoj L."/>
            <person name="Schutz K."/>
            <person name="Huang E."/>
            <person name="Spiegel L."/>
            <person name="Sekhon M."/>
            <person name="Murray J."/>
            <person name="Sheet P."/>
            <person name="Cordes M."/>
            <person name="Abu-Threideh J."/>
            <person name="Stoneking T."/>
            <person name="Kalicki J."/>
            <person name="Graves T."/>
            <person name="Harmon G."/>
            <person name="Edwards J."/>
            <person name="Latreille P."/>
            <person name="Courtney L."/>
            <person name="Cloud J."/>
            <person name="Abbott A."/>
            <person name="Scott K."/>
            <person name="Johnson D."/>
            <person name="Minx P."/>
            <person name="Bentley D."/>
            <person name="Fulton B."/>
            <person name="Miller N."/>
            <person name="Greco T."/>
            <person name="Kemp K."/>
            <person name="Kramer J."/>
            <person name="Fulton L."/>
            <person name="Mardis E."/>
            <person name="Dante M."/>
            <person name="Pepin K."/>
            <person name="Hillier L.W."/>
            <person name="Nelson J."/>
            <person name="Spieth J."/>
            <person name="Ryan E."/>
            <person name="Andrews S."/>
            <person name="Geisel C."/>
            <person name="Layman D."/>
            <person name="Du H."/>
            <person name="Ali J."/>
            <person name="Berghoff A."/>
            <person name="Jones K."/>
            <person name="Drone K."/>
            <person name="Cotton M."/>
            <person name="Joshu C."/>
            <person name="Antonoiu B."/>
            <person name="Zidanic M."/>
            <person name="Strong C."/>
            <person name="Sun H."/>
            <person name="Lamar B."/>
            <person name="Yordan C."/>
            <person name="Ma P."/>
            <person name="Zhong J."/>
            <person name="Preston R."/>
            <person name="Vil D."/>
            <person name="Shekher M."/>
            <person name="Matero A."/>
            <person name="Shah R."/>
            <person name="Swaby I.K."/>
            <person name="O'Shaughnessy A."/>
            <person name="Rodriguez M."/>
            <person name="Hoffman J."/>
            <person name="Till S."/>
            <person name="Granat S."/>
            <person name="Shohdy N."/>
            <person name="Hasegawa A."/>
            <person name="Hameed A."/>
            <person name="Lodhi M."/>
            <person name="Johnson A."/>
            <person name="Chen E."/>
            <person name="Marra M.A."/>
            <person name="Martienssen R."/>
            <person name="McCombie W.R."/>
        </authorList>
    </citation>
    <scope>NUCLEOTIDE SEQUENCE [LARGE SCALE GENOMIC DNA]</scope>
    <source>
        <strain>cv. Columbia</strain>
    </source>
</reference>
<reference key="2">
    <citation type="journal article" date="2017" name="Plant J.">
        <title>Araport11: a complete reannotation of the Arabidopsis thaliana reference genome.</title>
        <authorList>
            <person name="Cheng C.Y."/>
            <person name="Krishnakumar V."/>
            <person name="Chan A.P."/>
            <person name="Thibaud-Nissen F."/>
            <person name="Schobel S."/>
            <person name="Town C.D."/>
        </authorList>
    </citation>
    <scope>GENOME REANNOTATION</scope>
    <source>
        <strain>cv. Columbia</strain>
    </source>
</reference>
<reference key="3">
    <citation type="journal article" date="2003" name="Science">
        <title>Empirical analysis of transcriptional activity in the Arabidopsis genome.</title>
        <authorList>
            <person name="Yamada K."/>
            <person name="Lim J."/>
            <person name="Dale J.M."/>
            <person name="Chen H."/>
            <person name="Shinn P."/>
            <person name="Palm C.J."/>
            <person name="Southwick A.M."/>
            <person name="Wu H.C."/>
            <person name="Kim C.J."/>
            <person name="Nguyen M."/>
            <person name="Pham P.K."/>
            <person name="Cheuk R.F."/>
            <person name="Karlin-Newmann G."/>
            <person name="Liu S.X."/>
            <person name="Lam B."/>
            <person name="Sakano H."/>
            <person name="Wu T."/>
            <person name="Yu G."/>
            <person name="Miranda M."/>
            <person name="Quach H.L."/>
            <person name="Tripp M."/>
            <person name="Chang C.H."/>
            <person name="Lee J.M."/>
            <person name="Toriumi M.J."/>
            <person name="Chan M.M."/>
            <person name="Tang C.C."/>
            <person name="Onodera C.S."/>
            <person name="Deng J.M."/>
            <person name="Akiyama K."/>
            <person name="Ansari Y."/>
            <person name="Arakawa T."/>
            <person name="Banh J."/>
            <person name="Banno F."/>
            <person name="Bowser L."/>
            <person name="Brooks S.Y."/>
            <person name="Carninci P."/>
            <person name="Chao Q."/>
            <person name="Choy N."/>
            <person name="Enju A."/>
            <person name="Goldsmith A.D."/>
            <person name="Gurjal M."/>
            <person name="Hansen N.F."/>
            <person name="Hayashizaki Y."/>
            <person name="Johnson-Hopson C."/>
            <person name="Hsuan V.W."/>
            <person name="Iida K."/>
            <person name="Karnes M."/>
            <person name="Khan S."/>
            <person name="Koesema E."/>
            <person name="Ishida J."/>
            <person name="Jiang P.X."/>
            <person name="Jones T."/>
            <person name="Kawai J."/>
            <person name="Kamiya A."/>
            <person name="Meyers C."/>
            <person name="Nakajima M."/>
            <person name="Narusaka M."/>
            <person name="Seki M."/>
            <person name="Sakurai T."/>
            <person name="Satou M."/>
            <person name="Tamse R."/>
            <person name="Vaysberg M."/>
            <person name="Wallender E.K."/>
            <person name="Wong C."/>
            <person name="Yamamura Y."/>
            <person name="Yuan S."/>
            <person name="Shinozaki K."/>
            <person name="Davis R.W."/>
            <person name="Theologis A."/>
            <person name="Ecker J.R."/>
        </authorList>
    </citation>
    <scope>NUCLEOTIDE SEQUENCE [LARGE SCALE MRNA]</scope>
    <source>
        <strain>cv. Columbia</strain>
    </source>
</reference>
<reference key="4">
    <citation type="journal article" date="2005" name="Plant Physiol.">
        <title>An expression and bioinformatics analysis of the Arabidopsis serine carboxypeptidase-like gene family.</title>
        <authorList>
            <person name="Fraser C.M."/>
            <person name="Rider L.W."/>
            <person name="Chapple C."/>
        </authorList>
    </citation>
    <scope>GENE FAMILY</scope>
    <scope>TISSUE SPECIFICITY</scope>
    <scope>NOMENCLATURE</scope>
</reference>